<organism>
    <name type="scientific">Clupea pallasii</name>
    <name type="common">Pacific herring</name>
    <dbReference type="NCBI Taxonomy" id="30724"/>
    <lineage>
        <taxon>Eukaryota</taxon>
        <taxon>Metazoa</taxon>
        <taxon>Chordata</taxon>
        <taxon>Craniata</taxon>
        <taxon>Vertebrata</taxon>
        <taxon>Euteleostomi</taxon>
        <taxon>Actinopterygii</taxon>
        <taxon>Neopterygii</taxon>
        <taxon>Teleostei</taxon>
        <taxon>Clupei</taxon>
        <taxon>Clupeiformes</taxon>
        <taxon>Clupeoidei</taxon>
        <taxon>Clupeidae</taxon>
        <taxon>Clupea</taxon>
    </lineage>
</organism>
<accession>P69013</accession>
<accession>P02337</accession>
<sequence>ARRRRSSSRPIRRRRPRRRTTRRRRAGRRRR</sequence>
<proteinExistence type="evidence at protein level"/>
<feature type="peptide" id="PRO_0000044830" description="Protamine-YI">
    <location>
        <begin position="1"/>
        <end position="31"/>
    </location>
</feature>
<feature type="region of interest" description="Disordered" evidence="1">
    <location>
        <begin position="1"/>
        <end position="31"/>
    </location>
</feature>
<protein>
    <recommendedName>
        <fullName>Protamine-YI</fullName>
    </recommendedName>
    <alternativeName>
        <fullName>Clupeine-YI</fullName>
    </alternativeName>
</protein>
<name>PRTY1_CLUPA</name>
<evidence type="ECO:0000256" key="1">
    <source>
        <dbReference type="SAM" id="MobiDB-lite"/>
    </source>
</evidence>
<keyword id="KW-0158">Chromosome</keyword>
<keyword id="KW-0217">Developmental protein</keyword>
<keyword id="KW-0221">Differentiation</keyword>
<keyword id="KW-0903">Direct protein sequencing</keyword>
<keyword id="KW-0226">DNA condensation</keyword>
<keyword id="KW-0238">DNA-binding</keyword>
<keyword id="KW-0544">Nucleosome core</keyword>
<keyword id="KW-0539">Nucleus</keyword>
<keyword id="KW-0744">Spermatogenesis</keyword>
<dbReference type="PIR" id="A38051">
    <property type="entry name" value="CLHRY1"/>
</dbReference>
<dbReference type="IntAct" id="P69013">
    <property type="interactions" value="1"/>
</dbReference>
<dbReference type="MINT" id="P69013"/>
<dbReference type="iPTMnet" id="P69013"/>
<dbReference type="GO" id="GO:0000786">
    <property type="term" value="C:nucleosome"/>
    <property type="evidence" value="ECO:0007669"/>
    <property type="project" value="UniProtKB-KW"/>
</dbReference>
<dbReference type="GO" id="GO:0005634">
    <property type="term" value="C:nucleus"/>
    <property type="evidence" value="ECO:0007669"/>
    <property type="project" value="UniProtKB-SubCell"/>
</dbReference>
<dbReference type="GO" id="GO:0003677">
    <property type="term" value="F:DNA binding"/>
    <property type="evidence" value="ECO:0007669"/>
    <property type="project" value="UniProtKB-KW"/>
</dbReference>
<dbReference type="GO" id="GO:0030154">
    <property type="term" value="P:cell differentiation"/>
    <property type="evidence" value="ECO:0007669"/>
    <property type="project" value="UniProtKB-KW"/>
</dbReference>
<dbReference type="GO" id="GO:0030261">
    <property type="term" value="P:chromosome condensation"/>
    <property type="evidence" value="ECO:0007669"/>
    <property type="project" value="UniProtKB-KW"/>
</dbReference>
<dbReference type="GO" id="GO:0007283">
    <property type="term" value="P:spermatogenesis"/>
    <property type="evidence" value="ECO:0007669"/>
    <property type="project" value="UniProtKB-KW"/>
</dbReference>
<comment type="function">
    <text>Protamines substitute for histones in the chromatin of sperm during the haploid phase of spermatogenesis. They compact sperm DNA into a highly condensed, stable and inactive complex.</text>
</comment>
<comment type="subcellular location">
    <subcellularLocation>
        <location>Nucleus</location>
    </subcellularLocation>
    <subcellularLocation>
        <location>Chromosome</location>
    </subcellularLocation>
</comment>
<comment type="tissue specificity">
    <text>Testis.</text>
</comment>
<reference key="1">
    <citation type="journal article" date="1972" name="J. Biochem.">
        <title>Studies on protamines. XVII. The complete amino acid sequence of clupeine YI.</title>
        <authorList>
            <person name="Suzuki K."/>
            <person name="Ando T."/>
        </authorList>
    </citation>
    <scope>PROTEIN SEQUENCE</scope>
</reference>